<dbReference type="EC" id="2.3.1.234" evidence="1"/>
<dbReference type="EMBL" id="BX571856">
    <property type="protein sequence ID" value="CAG41117.1"/>
    <property type="molecule type" value="Genomic_DNA"/>
</dbReference>
<dbReference type="RefSeq" id="WP_000159047.1">
    <property type="nucleotide sequence ID" value="NC_002952.2"/>
</dbReference>
<dbReference type="SMR" id="Q6GF23"/>
<dbReference type="KEGG" id="sar:SAR2136"/>
<dbReference type="HOGENOM" id="CLU_023208_0_2_9"/>
<dbReference type="Proteomes" id="UP000000596">
    <property type="component" value="Chromosome"/>
</dbReference>
<dbReference type="GO" id="GO:0005737">
    <property type="term" value="C:cytoplasm"/>
    <property type="evidence" value="ECO:0007669"/>
    <property type="project" value="UniProtKB-SubCell"/>
</dbReference>
<dbReference type="GO" id="GO:0005506">
    <property type="term" value="F:iron ion binding"/>
    <property type="evidence" value="ECO:0007669"/>
    <property type="project" value="UniProtKB-UniRule"/>
</dbReference>
<dbReference type="GO" id="GO:0061711">
    <property type="term" value="F:N(6)-L-threonylcarbamoyladenine synthase activity"/>
    <property type="evidence" value="ECO:0007669"/>
    <property type="project" value="UniProtKB-EC"/>
</dbReference>
<dbReference type="GO" id="GO:0002949">
    <property type="term" value="P:tRNA threonylcarbamoyladenosine modification"/>
    <property type="evidence" value="ECO:0007669"/>
    <property type="project" value="UniProtKB-UniRule"/>
</dbReference>
<dbReference type="CDD" id="cd24133">
    <property type="entry name" value="ASKHA_NBD_TsaD_bac"/>
    <property type="match status" value="1"/>
</dbReference>
<dbReference type="FunFam" id="3.30.420.40:FF:000012">
    <property type="entry name" value="tRNA N6-adenosine threonylcarbamoyltransferase"/>
    <property type="match status" value="1"/>
</dbReference>
<dbReference type="FunFam" id="3.30.420.40:FF:000040">
    <property type="entry name" value="tRNA N6-adenosine threonylcarbamoyltransferase"/>
    <property type="match status" value="1"/>
</dbReference>
<dbReference type="Gene3D" id="3.30.420.40">
    <property type="match status" value="2"/>
</dbReference>
<dbReference type="HAMAP" id="MF_01445">
    <property type="entry name" value="TsaD"/>
    <property type="match status" value="1"/>
</dbReference>
<dbReference type="InterPro" id="IPR043129">
    <property type="entry name" value="ATPase_NBD"/>
</dbReference>
<dbReference type="InterPro" id="IPR000905">
    <property type="entry name" value="Gcp-like_dom"/>
</dbReference>
<dbReference type="InterPro" id="IPR017861">
    <property type="entry name" value="KAE1/TsaD"/>
</dbReference>
<dbReference type="InterPro" id="IPR017860">
    <property type="entry name" value="Peptidase_M22_CS"/>
</dbReference>
<dbReference type="InterPro" id="IPR022450">
    <property type="entry name" value="TsaD"/>
</dbReference>
<dbReference type="NCBIfam" id="TIGR00329">
    <property type="entry name" value="gcp_kae1"/>
    <property type="match status" value="1"/>
</dbReference>
<dbReference type="NCBIfam" id="TIGR03723">
    <property type="entry name" value="T6A_TsaD_YgjD"/>
    <property type="match status" value="1"/>
</dbReference>
<dbReference type="PANTHER" id="PTHR11735">
    <property type="entry name" value="TRNA N6-ADENOSINE THREONYLCARBAMOYLTRANSFERASE"/>
    <property type="match status" value="1"/>
</dbReference>
<dbReference type="PANTHER" id="PTHR11735:SF6">
    <property type="entry name" value="TRNA N6-ADENOSINE THREONYLCARBAMOYLTRANSFERASE, MITOCHONDRIAL"/>
    <property type="match status" value="1"/>
</dbReference>
<dbReference type="Pfam" id="PF00814">
    <property type="entry name" value="TsaD"/>
    <property type="match status" value="1"/>
</dbReference>
<dbReference type="PRINTS" id="PR00789">
    <property type="entry name" value="OSIALOPTASE"/>
</dbReference>
<dbReference type="SUPFAM" id="SSF53067">
    <property type="entry name" value="Actin-like ATPase domain"/>
    <property type="match status" value="2"/>
</dbReference>
<dbReference type="PROSITE" id="PS01016">
    <property type="entry name" value="GLYCOPROTEASE"/>
    <property type="match status" value="1"/>
</dbReference>
<gene>
    <name evidence="1" type="primary">tsaD</name>
    <name type="synonym">gcp</name>
    <name type="ordered locus">SAR2136</name>
</gene>
<sequence length="341" mass="36923">MTKDILILAVETSCDETSVSVIKNGRDILSNTVLSQIESHKRFGGVVPEVASRHHVEGITTTINEALVDADVSMEDIDAIAVTEGPGLIGALLIGVNAAKALAFAYDKPLIPVHHIAGHIYANHIEEPLTFPLIALIVSGGHTELVYMKDHLTFEVIGETRDDAVGEAYDKVARTIGLNYPGGPQVDRLAAEGEDTYSFPRVWLDKDSYDFSFSGLKSAVINQLHNQRQKNIPIIEANVATSFQNSVVEVLTFKAIQACKEYGVQRLIVAGGVASNKGLRQSLADQCKVNDIQLTIPSPKLCTDNAAMIGVAGHYLYQQGRFADLALNGHSNIDLEEYSAE</sequence>
<organism>
    <name type="scientific">Staphylococcus aureus (strain MRSA252)</name>
    <dbReference type="NCBI Taxonomy" id="282458"/>
    <lineage>
        <taxon>Bacteria</taxon>
        <taxon>Bacillati</taxon>
        <taxon>Bacillota</taxon>
        <taxon>Bacilli</taxon>
        <taxon>Bacillales</taxon>
        <taxon>Staphylococcaceae</taxon>
        <taxon>Staphylococcus</taxon>
    </lineage>
</organism>
<evidence type="ECO:0000255" key="1">
    <source>
        <dbReference type="HAMAP-Rule" id="MF_01445"/>
    </source>
</evidence>
<name>TSAD_STAAR</name>
<protein>
    <recommendedName>
        <fullName evidence="1">tRNA N6-adenosine threonylcarbamoyltransferase</fullName>
        <ecNumber evidence="1">2.3.1.234</ecNumber>
    </recommendedName>
    <alternativeName>
        <fullName evidence="1">N6-L-threonylcarbamoyladenine synthase</fullName>
        <shortName evidence="1">t(6)A synthase</shortName>
    </alternativeName>
    <alternativeName>
        <fullName evidence="1">t(6)A37 threonylcarbamoyladenosine biosynthesis protein TsaD</fullName>
    </alternativeName>
    <alternativeName>
        <fullName evidence="1">tRNA threonylcarbamoyladenosine biosynthesis protein TsaD</fullName>
    </alternativeName>
</protein>
<keyword id="KW-0012">Acyltransferase</keyword>
<keyword id="KW-0963">Cytoplasm</keyword>
<keyword id="KW-0408">Iron</keyword>
<keyword id="KW-0479">Metal-binding</keyword>
<keyword id="KW-0808">Transferase</keyword>
<keyword id="KW-0819">tRNA processing</keyword>
<feature type="chain" id="PRO_0000303546" description="tRNA N6-adenosine threonylcarbamoyltransferase">
    <location>
        <begin position="1"/>
        <end position="341"/>
    </location>
</feature>
<feature type="binding site" evidence="1">
    <location>
        <position position="115"/>
    </location>
    <ligand>
        <name>Fe cation</name>
        <dbReference type="ChEBI" id="CHEBI:24875"/>
    </ligand>
</feature>
<feature type="binding site" evidence="1">
    <location>
        <position position="119"/>
    </location>
    <ligand>
        <name>Fe cation</name>
        <dbReference type="ChEBI" id="CHEBI:24875"/>
    </ligand>
</feature>
<feature type="binding site" evidence="1">
    <location>
        <begin position="137"/>
        <end position="141"/>
    </location>
    <ligand>
        <name>substrate</name>
    </ligand>
</feature>
<feature type="binding site" evidence="1">
    <location>
        <position position="170"/>
    </location>
    <ligand>
        <name>substrate</name>
    </ligand>
</feature>
<feature type="binding site" evidence="1">
    <location>
        <position position="183"/>
    </location>
    <ligand>
        <name>substrate</name>
    </ligand>
</feature>
<feature type="binding site" evidence="1">
    <location>
        <position position="187"/>
    </location>
    <ligand>
        <name>substrate</name>
    </ligand>
</feature>
<feature type="binding site" evidence="1">
    <location>
        <position position="276"/>
    </location>
    <ligand>
        <name>substrate</name>
    </ligand>
</feature>
<feature type="binding site" evidence="1">
    <location>
        <position position="304"/>
    </location>
    <ligand>
        <name>Fe cation</name>
        <dbReference type="ChEBI" id="CHEBI:24875"/>
    </ligand>
</feature>
<reference key="1">
    <citation type="journal article" date="2004" name="Proc. Natl. Acad. Sci. U.S.A.">
        <title>Complete genomes of two clinical Staphylococcus aureus strains: evidence for the rapid evolution of virulence and drug resistance.</title>
        <authorList>
            <person name="Holden M.T.G."/>
            <person name="Feil E.J."/>
            <person name="Lindsay J.A."/>
            <person name="Peacock S.J."/>
            <person name="Day N.P.J."/>
            <person name="Enright M.C."/>
            <person name="Foster T.J."/>
            <person name="Moore C.E."/>
            <person name="Hurst L."/>
            <person name="Atkin R."/>
            <person name="Barron A."/>
            <person name="Bason N."/>
            <person name="Bentley S.D."/>
            <person name="Chillingworth C."/>
            <person name="Chillingworth T."/>
            <person name="Churcher C."/>
            <person name="Clark L."/>
            <person name="Corton C."/>
            <person name="Cronin A."/>
            <person name="Doggett J."/>
            <person name="Dowd L."/>
            <person name="Feltwell T."/>
            <person name="Hance Z."/>
            <person name="Harris B."/>
            <person name="Hauser H."/>
            <person name="Holroyd S."/>
            <person name="Jagels K."/>
            <person name="James K.D."/>
            <person name="Lennard N."/>
            <person name="Line A."/>
            <person name="Mayes R."/>
            <person name="Moule S."/>
            <person name="Mungall K."/>
            <person name="Ormond D."/>
            <person name="Quail M.A."/>
            <person name="Rabbinowitsch E."/>
            <person name="Rutherford K.M."/>
            <person name="Sanders M."/>
            <person name="Sharp S."/>
            <person name="Simmonds M."/>
            <person name="Stevens K."/>
            <person name="Whitehead S."/>
            <person name="Barrell B.G."/>
            <person name="Spratt B.G."/>
            <person name="Parkhill J."/>
        </authorList>
    </citation>
    <scope>NUCLEOTIDE SEQUENCE [LARGE SCALE GENOMIC DNA]</scope>
    <source>
        <strain>MRSA252</strain>
    </source>
</reference>
<accession>Q6GF23</accession>
<proteinExistence type="inferred from homology"/>
<comment type="function">
    <text evidence="1">Required for the formation of a threonylcarbamoyl group on adenosine at position 37 (t(6)A37) in tRNAs that read codons beginning with adenine. Is involved in the transfer of the threonylcarbamoyl moiety of threonylcarbamoyl-AMP (TC-AMP) to the N6 group of A37, together with TsaE and TsaB. TsaD likely plays a direct catalytic role in this reaction.</text>
</comment>
<comment type="catalytic activity">
    <reaction evidence="1">
        <text>L-threonylcarbamoyladenylate + adenosine(37) in tRNA = N(6)-L-threonylcarbamoyladenosine(37) in tRNA + AMP + H(+)</text>
        <dbReference type="Rhea" id="RHEA:37059"/>
        <dbReference type="Rhea" id="RHEA-COMP:10162"/>
        <dbReference type="Rhea" id="RHEA-COMP:10163"/>
        <dbReference type="ChEBI" id="CHEBI:15378"/>
        <dbReference type="ChEBI" id="CHEBI:73682"/>
        <dbReference type="ChEBI" id="CHEBI:74411"/>
        <dbReference type="ChEBI" id="CHEBI:74418"/>
        <dbReference type="ChEBI" id="CHEBI:456215"/>
        <dbReference type="EC" id="2.3.1.234"/>
    </reaction>
</comment>
<comment type="cofactor">
    <cofactor evidence="1">
        <name>Fe(2+)</name>
        <dbReference type="ChEBI" id="CHEBI:29033"/>
    </cofactor>
    <text evidence="1">Binds 1 Fe(2+) ion per subunit.</text>
</comment>
<comment type="subcellular location">
    <subcellularLocation>
        <location evidence="1">Cytoplasm</location>
    </subcellularLocation>
</comment>
<comment type="similarity">
    <text evidence="1">Belongs to the KAE1 / TsaD family.</text>
</comment>